<accession>A6QQD2</accession>
<name>ACTMP_BOVIN</name>
<feature type="chain" id="PRO_0000359783" description="Actin maturation protease">
    <location>
        <begin position="1"/>
        <end position="348"/>
    </location>
</feature>
<feature type="region of interest" description="Disordered" evidence="3">
    <location>
        <begin position="1"/>
        <end position="64"/>
    </location>
</feature>
<feature type="region of interest" description="Peptidase C39-like" evidence="2">
    <location>
        <begin position="121"/>
        <end position="241"/>
    </location>
</feature>
<feature type="compositionally biased region" description="Pro residues" evidence="3">
    <location>
        <begin position="1"/>
        <end position="18"/>
    </location>
</feature>
<feature type="compositionally biased region" description="Low complexity" evidence="3">
    <location>
        <begin position="34"/>
        <end position="48"/>
    </location>
</feature>
<feature type="compositionally biased region" description="Pro residues" evidence="3">
    <location>
        <begin position="49"/>
        <end position="60"/>
    </location>
</feature>
<feature type="active site" evidence="2">
    <location>
        <position position="129"/>
    </location>
</feature>
<feature type="modified residue" description="Phosphoserine" evidence="2">
    <location>
        <position position="313"/>
    </location>
</feature>
<protein>
    <recommendedName>
        <fullName evidence="2">Actin maturation protease</fullName>
        <ecNumber evidence="2">3.4.11.-</ecNumber>
    </recommendedName>
    <alternativeName>
        <fullName evidence="2">Actin aminopeptidase ACTMAP</fullName>
    </alternativeName>
</protein>
<comment type="function">
    <text evidence="1 2">Actin maturation protease that specifically mediates the cleavage of immature acetylated N-terminal actin, thereby contributing to actin maturation (By similarity). Cleaves N-terminal acetylated methionine of immature cytoplasmic beta- and gamma-actins ACTB and ACTG1 after translation (By similarity). Cleaves N-terminal acetylated cysteine of muscle alpha-actins ACTA1, ACTC1 and ACTA2 after canonical removal of N-terminal methionine (By similarity).</text>
</comment>
<comment type="catalytic activity">
    <molecule>Actin maturation protease</molecule>
    <reaction evidence="2">
        <text>N-terminal N(alpha)-acetyl-L-methionyl-L-aspartyl-[protein] + H2O = N-terminal L-aspartyl-[protein] + N-acetyl-L-methionine</text>
        <dbReference type="Rhea" id="RHEA:74571"/>
        <dbReference type="Rhea" id="RHEA-COMP:12669"/>
        <dbReference type="Rhea" id="RHEA-COMP:12693"/>
        <dbReference type="ChEBI" id="CHEBI:15377"/>
        <dbReference type="ChEBI" id="CHEBI:64720"/>
        <dbReference type="ChEBI" id="CHEBI:71670"/>
        <dbReference type="ChEBI" id="CHEBI:133063"/>
    </reaction>
    <physiologicalReaction direction="left-to-right" evidence="2">
        <dbReference type="Rhea" id="RHEA:74572"/>
    </physiologicalReaction>
</comment>
<comment type="catalytic activity">
    <molecule>Actin maturation protease</molecule>
    <reaction evidence="2">
        <text>N-terminal N(alpha)-acetyl-L-methionyl-L-glutamyl-[protein] + H2O = N-terminal L-glutamyl-[protein] + N-acetyl-L-methionine</text>
        <dbReference type="Rhea" id="RHEA:74575"/>
        <dbReference type="Rhea" id="RHEA-COMP:12668"/>
        <dbReference type="Rhea" id="RHEA-COMP:12697"/>
        <dbReference type="ChEBI" id="CHEBI:15377"/>
        <dbReference type="ChEBI" id="CHEBI:64721"/>
        <dbReference type="ChEBI" id="CHEBI:71670"/>
        <dbReference type="ChEBI" id="CHEBI:133360"/>
    </reaction>
    <physiologicalReaction direction="left-to-right" evidence="2">
        <dbReference type="Rhea" id="RHEA:74576"/>
    </physiologicalReaction>
</comment>
<comment type="catalytic activity">
    <molecule>Actin maturation protease</molecule>
    <reaction evidence="1">
        <text>N-terminal N(alpha)-acetyl-L-cysteinyl-L-aspartyl-[protein] + H2O = N-terminal L-aspartyl-[protein] + N-acetyl-L-cysteine</text>
        <dbReference type="Rhea" id="RHEA:74579"/>
        <dbReference type="Rhea" id="RHEA-COMP:12669"/>
        <dbReference type="Rhea" id="RHEA-COMP:18395"/>
        <dbReference type="ChEBI" id="CHEBI:15377"/>
        <dbReference type="ChEBI" id="CHEBI:64720"/>
        <dbReference type="ChEBI" id="CHEBI:78236"/>
        <dbReference type="ChEBI" id="CHEBI:193599"/>
    </reaction>
    <physiologicalReaction direction="left-to-right" evidence="1">
        <dbReference type="Rhea" id="RHEA:74580"/>
    </physiologicalReaction>
</comment>
<comment type="catalytic activity">
    <molecule>Actin maturation protease</molecule>
    <reaction evidence="1">
        <text>N-terminal N(alpha)-acetyl-L-cysteinyl-L-glutamyl-[protein] + H2O = N-terminal L-glutamyl-[protein] + N-acetyl-L-cysteine</text>
        <dbReference type="Rhea" id="RHEA:74583"/>
        <dbReference type="Rhea" id="RHEA-COMP:12668"/>
        <dbReference type="Rhea" id="RHEA-COMP:18396"/>
        <dbReference type="ChEBI" id="CHEBI:15377"/>
        <dbReference type="ChEBI" id="CHEBI:64721"/>
        <dbReference type="ChEBI" id="CHEBI:78236"/>
        <dbReference type="ChEBI" id="CHEBI:193601"/>
    </reaction>
    <physiologicalReaction direction="left-to-right" evidence="1">
        <dbReference type="Rhea" id="RHEA:74584"/>
    </physiologicalReaction>
</comment>
<comment type="subunit">
    <text evidence="2">Interacts (via N-terminus) with PFN2; the interaction may facilitate efficient cleavage of the acetylated N-terminus of immature actin (By similarity). Interacts with PFN1 (By similarity).</text>
</comment>
<comment type="subcellular location">
    <subcellularLocation>
        <location evidence="2">Cytoplasm</location>
    </subcellularLocation>
</comment>
<comment type="domain">
    <text evidence="2">The N-terminal proline-rich disordered region contributes to the interaction with PFN2.</text>
</comment>
<comment type="similarity">
    <text evidence="4">Belongs to the ACTMAP family.</text>
</comment>
<comment type="sequence caution" evidence="4">
    <conflict type="erroneous initiation">
        <sequence resource="EMBL-CDS" id="AAI49772"/>
    </conflict>
    <text>Truncated N-terminus.</text>
</comment>
<organism>
    <name type="scientific">Bos taurus</name>
    <name type="common">Bovine</name>
    <dbReference type="NCBI Taxonomy" id="9913"/>
    <lineage>
        <taxon>Eukaryota</taxon>
        <taxon>Metazoa</taxon>
        <taxon>Chordata</taxon>
        <taxon>Craniata</taxon>
        <taxon>Vertebrata</taxon>
        <taxon>Euteleostomi</taxon>
        <taxon>Mammalia</taxon>
        <taxon>Eutheria</taxon>
        <taxon>Laurasiatheria</taxon>
        <taxon>Artiodactyla</taxon>
        <taxon>Ruminantia</taxon>
        <taxon>Pecora</taxon>
        <taxon>Bovidae</taxon>
        <taxon>Bovinae</taxon>
        <taxon>Bos</taxon>
    </lineage>
</organism>
<sequence>MISPCSPPLEPPVPPPETPASQALSIPLPPLPLNLPELAFPPSSFQASVPPPPPLPPPPRTTGFAPPHVFGLEKSQLLKEALERAGPAPGSREDVKRLLKLHKDRFRSDLQWILFCADLPSLIQEGPQCGLVALWMAGTLLAPPGGTPLERLVQVAMERGYTAQGEMFSVADMGRLAQEALGCQAEVLCGGLGGPNRDHVLQHIVAGHPLLIPYDEDFNHEPCQRRGHKAHWAVSAGVLLGVQHVPSLGYSEDPELPGLFHPVPGTPHQPPSLPEEGSPGAVYLLAKQGKSWHHQLWDYDQVRDSNLQLTDFSPSRAADGREYVVPAGGVRAGLCGQALLLRPQDSSH</sequence>
<gene>
    <name evidence="2" type="primary">ACTMAP</name>
</gene>
<dbReference type="EC" id="3.4.11.-" evidence="2"/>
<dbReference type="EMBL" id="AAFC03006023">
    <property type="status" value="NOT_ANNOTATED_CDS"/>
    <property type="molecule type" value="Genomic_DNA"/>
</dbReference>
<dbReference type="EMBL" id="BC149771">
    <property type="protein sequence ID" value="AAI49772.2"/>
    <property type="status" value="ALT_INIT"/>
    <property type="molecule type" value="mRNA"/>
</dbReference>
<dbReference type="RefSeq" id="NP_001157497.1">
    <property type="nucleotide sequence ID" value="NM_001164025.3"/>
</dbReference>
<dbReference type="FunCoup" id="A6QQD2">
    <property type="interactions" value="595"/>
</dbReference>
<dbReference type="STRING" id="9913.ENSBTAP00000041514"/>
<dbReference type="PaxDb" id="9913-ENSBTAP00000041514"/>
<dbReference type="Ensembl" id="ENSBTAT00000043989.4">
    <property type="protein sequence ID" value="ENSBTAP00000041514.3"/>
    <property type="gene ID" value="ENSBTAG00000023453.6"/>
</dbReference>
<dbReference type="GeneID" id="509803"/>
<dbReference type="KEGG" id="bta:509803"/>
<dbReference type="CTD" id="284325"/>
<dbReference type="VEuPathDB" id="HostDB:ENSBTAG00000023453"/>
<dbReference type="VGNC" id="VGNC:49180">
    <property type="gene designation" value="ACTMAP"/>
</dbReference>
<dbReference type="eggNOG" id="ENOG502QQQD">
    <property type="taxonomic scope" value="Eukaryota"/>
</dbReference>
<dbReference type="GeneTree" id="ENSGT00390000012368"/>
<dbReference type="HOGENOM" id="CLU_077492_1_0_1"/>
<dbReference type="InParanoid" id="A6QQD2"/>
<dbReference type="OMA" id="QLWDYEQ"/>
<dbReference type="OrthoDB" id="198816at2759"/>
<dbReference type="TreeFam" id="TF314051"/>
<dbReference type="Proteomes" id="UP000009136">
    <property type="component" value="Chromosome 18"/>
</dbReference>
<dbReference type="Bgee" id="ENSBTAG00000023453">
    <property type="expression patterns" value="Expressed in corpus luteum and 104 other cell types or tissues"/>
</dbReference>
<dbReference type="GO" id="GO:0005737">
    <property type="term" value="C:cytoplasm"/>
    <property type="evidence" value="ECO:0007669"/>
    <property type="project" value="UniProtKB-SubCell"/>
</dbReference>
<dbReference type="GO" id="GO:0004239">
    <property type="term" value="F:initiator methionyl aminopeptidase activity"/>
    <property type="evidence" value="ECO:0000250"/>
    <property type="project" value="UniProtKB"/>
</dbReference>
<dbReference type="GO" id="GO:0006508">
    <property type="term" value="P:proteolysis"/>
    <property type="evidence" value="ECO:0007669"/>
    <property type="project" value="UniProtKB-KW"/>
</dbReference>
<dbReference type="InterPro" id="IPR040043">
    <property type="entry name" value="ACTMAP"/>
</dbReference>
<dbReference type="PANTHER" id="PTHR28631:SF1">
    <property type="entry name" value="ACTIN MATURATION PROTEASE"/>
    <property type="match status" value="1"/>
</dbReference>
<dbReference type="PANTHER" id="PTHR28631">
    <property type="entry name" value="UPF0692 PROTEIN C19ORF54"/>
    <property type="match status" value="1"/>
</dbReference>
<dbReference type="Pfam" id="PF21646">
    <property type="entry name" value="ACTMAP-like_C"/>
    <property type="match status" value="1"/>
</dbReference>
<evidence type="ECO:0000250" key="1">
    <source>
        <dbReference type="UniProtKB" id="J3QPC3"/>
    </source>
</evidence>
<evidence type="ECO:0000250" key="2">
    <source>
        <dbReference type="UniProtKB" id="Q5BKX5"/>
    </source>
</evidence>
<evidence type="ECO:0000256" key="3">
    <source>
        <dbReference type="SAM" id="MobiDB-lite"/>
    </source>
</evidence>
<evidence type="ECO:0000305" key="4"/>
<proteinExistence type="evidence at transcript level"/>
<keyword id="KW-0031">Aminopeptidase</keyword>
<keyword id="KW-0963">Cytoplasm</keyword>
<keyword id="KW-0378">Hydrolase</keyword>
<keyword id="KW-0597">Phosphoprotein</keyword>
<keyword id="KW-0645">Protease</keyword>
<keyword id="KW-1185">Reference proteome</keyword>
<reference key="1">
    <citation type="journal article" date="2009" name="Science">
        <title>The genome sequence of taurine cattle: a window to ruminant biology and evolution.</title>
        <authorList>
            <consortium name="The bovine genome sequencing and analysis consortium"/>
        </authorList>
    </citation>
    <scope>NUCLEOTIDE SEQUENCE [LARGE SCALE GENOMIC DNA]</scope>
    <source>
        <strain>Hereford</strain>
    </source>
</reference>
<reference key="2">
    <citation type="submission" date="2007-07" db="EMBL/GenBank/DDBJ databases">
        <authorList>
            <consortium name="NIH - Mammalian Gene Collection (MGC) project"/>
        </authorList>
    </citation>
    <scope>NUCLEOTIDE SEQUENCE [LARGE SCALE MRNA] OF 130-348</scope>
    <source>
        <strain>Hereford</strain>
        <tissue>Ascending colon</tissue>
    </source>
</reference>